<proteinExistence type="inferred from homology"/>
<reference key="1">
    <citation type="submission" date="2007-03" db="EMBL/GenBank/DDBJ databases">
        <title>Complete sequence of Desulfotomaculum reducens MI-1.</title>
        <authorList>
            <consortium name="US DOE Joint Genome Institute"/>
            <person name="Copeland A."/>
            <person name="Lucas S."/>
            <person name="Lapidus A."/>
            <person name="Barry K."/>
            <person name="Detter J.C."/>
            <person name="Glavina del Rio T."/>
            <person name="Hammon N."/>
            <person name="Israni S."/>
            <person name="Dalin E."/>
            <person name="Tice H."/>
            <person name="Pitluck S."/>
            <person name="Sims D."/>
            <person name="Brettin T."/>
            <person name="Bruce D."/>
            <person name="Han C."/>
            <person name="Tapia R."/>
            <person name="Schmutz J."/>
            <person name="Larimer F."/>
            <person name="Land M."/>
            <person name="Hauser L."/>
            <person name="Kyrpides N."/>
            <person name="Kim E."/>
            <person name="Tebo B.M."/>
            <person name="Richardson P."/>
        </authorList>
    </citation>
    <scope>NUCLEOTIDE SEQUENCE [LARGE SCALE GENOMIC DNA]</scope>
    <source>
        <strain>ATCC BAA-1160 / DSM 100696 / MI-1</strain>
    </source>
</reference>
<name>RL36_DESRM</name>
<feature type="chain" id="PRO_1000071861" description="Large ribosomal subunit protein bL36">
    <location>
        <begin position="1"/>
        <end position="37"/>
    </location>
</feature>
<comment type="similarity">
    <text evidence="1">Belongs to the bacterial ribosomal protein bL36 family.</text>
</comment>
<dbReference type="EMBL" id="CP000612">
    <property type="protein sequence ID" value="ABO48788.1"/>
    <property type="molecule type" value="Genomic_DNA"/>
</dbReference>
<dbReference type="RefSeq" id="WP_003544690.1">
    <property type="nucleotide sequence ID" value="NC_009253.1"/>
</dbReference>
<dbReference type="SMR" id="A4J135"/>
<dbReference type="STRING" id="349161.Dred_0239"/>
<dbReference type="KEGG" id="drm:Dred_0239"/>
<dbReference type="eggNOG" id="COG0257">
    <property type="taxonomic scope" value="Bacteria"/>
</dbReference>
<dbReference type="HOGENOM" id="CLU_135723_6_2_9"/>
<dbReference type="OrthoDB" id="9802520at2"/>
<dbReference type="Proteomes" id="UP000001556">
    <property type="component" value="Chromosome"/>
</dbReference>
<dbReference type="GO" id="GO:0005737">
    <property type="term" value="C:cytoplasm"/>
    <property type="evidence" value="ECO:0007669"/>
    <property type="project" value="UniProtKB-ARBA"/>
</dbReference>
<dbReference type="GO" id="GO:1990904">
    <property type="term" value="C:ribonucleoprotein complex"/>
    <property type="evidence" value="ECO:0007669"/>
    <property type="project" value="UniProtKB-KW"/>
</dbReference>
<dbReference type="GO" id="GO:0005840">
    <property type="term" value="C:ribosome"/>
    <property type="evidence" value="ECO:0007669"/>
    <property type="project" value="UniProtKB-KW"/>
</dbReference>
<dbReference type="GO" id="GO:0003735">
    <property type="term" value="F:structural constituent of ribosome"/>
    <property type="evidence" value="ECO:0007669"/>
    <property type="project" value="InterPro"/>
</dbReference>
<dbReference type="GO" id="GO:0006412">
    <property type="term" value="P:translation"/>
    <property type="evidence" value="ECO:0007669"/>
    <property type="project" value="UniProtKB-UniRule"/>
</dbReference>
<dbReference type="HAMAP" id="MF_00251">
    <property type="entry name" value="Ribosomal_bL36"/>
    <property type="match status" value="1"/>
</dbReference>
<dbReference type="InterPro" id="IPR000473">
    <property type="entry name" value="Ribosomal_bL36"/>
</dbReference>
<dbReference type="InterPro" id="IPR035977">
    <property type="entry name" value="Ribosomal_bL36_sp"/>
</dbReference>
<dbReference type="NCBIfam" id="TIGR01022">
    <property type="entry name" value="rpmJ_bact"/>
    <property type="match status" value="1"/>
</dbReference>
<dbReference type="PANTHER" id="PTHR42888">
    <property type="entry name" value="50S RIBOSOMAL PROTEIN L36, CHLOROPLASTIC"/>
    <property type="match status" value="1"/>
</dbReference>
<dbReference type="PANTHER" id="PTHR42888:SF1">
    <property type="entry name" value="LARGE RIBOSOMAL SUBUNIT PROTEIN BL36C"/>
    <property type="match status" value="1"/>
</dbReference>
<dbReference type="Pfam" id="PF00444">
    <property type="entry name" value="Ribosomal_L36"/>
    <property type="match status" value="1"/>
</dbReference>
<dbReference type="SUPFAM" id="SSF57840">
    <property type="entry name" value="Ribosomal protein L36"/>
    <property type="match status" value="1"/>
</dbReference>
<dbReference type="PROSITE" id="PS00828">
    <property type="entry name" value="RIBOSOMAL_L36"/>
    <property type="match status" value="1"/>
</dbReference>
<gene>
    <name evidence="1" type="primary">rpmJ</name>
    <name type="ordered locus">Dred_0239</name>
</gene>
<evidence type="ECO:0000255" key="1">
    <source>
        <dbReference type="HAMAP-Rule" id="MF_00251"/>
    </source>
</evidence>
<evidence type="ECO:0000305" key="2"/>
<accession>A4J135</accession>
<sequence length="37" mass="4320">MKVRPSVKPICEKCKIIRREGKVMVICENPKHKQKQG</sequence>
<keyword id="KW-1185">Reference proteome</keyword>
<keyword id="KW-0687">Ribonucleoprotein</keyword>
<keyword id="KW-0689">Ribosomal protein</keyword>
<protein>
    <recommendedName>
        <fullName evidence="1">Large ribosomal subunit protein bL36</fullName>
    </recommendedName>
    <alternativeName>
        <fullName evidence="2">50S ribosomal protein L36</fullName>
    </alternativeName>
</protein>
<organism>
    <name type="scientific">Desulforamulus reducens (strain ATCC BAA-1160 / DSM 100696 / MI-1)</name>
    <name type="common">Desulfotomaculum reducens</name>
    <dbReference type="NCBI Taxonomy" id="349161"/>
    <lineage>
        <taxon>Bacteria</taxon>
        <taxon>Bacillati</taxon>
        <taxon>Bacillota</taxon>
        <taxon>Clostridia</taxon>
        <taxon>Eubacteriales</taxon>
        <taxon>Peptococcaceae</taxon>
        <taxon>Desulforamulus</taxon>
    </lineage>
</organism>